<protein>
    <recommendedName>
        <fullName evidence="1">Large ribosomal subunit protein uL15</fullName>
    </recommendedName>
    <alternativeName>
        <fullName evidence="3">50S ribosomal protein L15</fullName>
    </alternativeName>
</protein>
<reference key="1">
    <citation type="journal article" date="2004" name="Nature">
        <title>Genome sequence of Silicibacter pomeroyi reveals adaptations to the marine environment.</title>
        <authorList>
            <person name="Moran M.A."/>
            <person name="Buchan A."/>
            <person name="Gonzalez J.M."/>
            <person name="Heidelberg J.F."/>
            <person name="Whitman W.B."/>
            <person name="Kiene R.P."/>
            <person name="Henriksen J.R."/>
            <person name="King G.M."/>
            <person name="Belas R."/>
            <person name="Fuqua C."/>
            <person name="Brinkac L.M."/>
            <person name="Lewis M."/>
            <person name="Johri S."/>
            <person name="Weaver B."/>
            <person name="Pai G."/>
            <person name="Eisen J.A."/>
            <person name="Rahe E."/>
            <person name="Sheldon W.M."/>
            <person name="Ye W."/>
            <person name="Miller T.R."/>
            <person name="Carlton J."/>
            <person name="Rasko D.A."/>
            <person name="Paulsen I.T."/>
            <person name="Ren Q."/>
            <person name="Daugherty S.C."/>
            <person name="DeBoy R.T."/>
            <person name="Dodson R.J."/>
            <person name="Durkin A.S."/>
            <person name="Madupu R."/>
            <person name="Nelson W.C."/>
            <person name="Sullivan S.A."/>
            <person name="Rosovitz M.J."/>
            <person name="Haft D.H."/>
            <person name="Selengut J."/>
            <person name="Ward N."/>
        </authorList>
    </citation>
    <scope>NUCLEOTIDE SEQUENCE [LARGE SCALE GENOMIC DNA]</scope>
    <source>
        <strain>ATCC 700808 / DSM 15171 / DSS-3</strain>
    </source>
</reference>
<reference key="2">
    <citation type="journal article" date="2014" name="Stand. Genomic Sci.">
        <title>An updated genome annotation for the model marine bacterium Ruegeria pomeroyi DSS-3.</title>
        <authorList>
            <person name="Rivers A.R."/>
            <person name="Smith C.B."/>
            <person name="Moran M.A."/>
        </authorList>
    </citation>
    <scope>GENOME REANNOTATION</scope>
    <source>
        <strain>ATCC 700808 / DSM 15171 / DSS-3</strain>
    </source>
</reference>
<gene>
    <name evidence="1" type="primary">rplO</name>
    <name type="ordered locus">SPO0505</name>
</gene>
<accession>Q5LW38</accession>
<proteinExistence type="inferred from homology"/>
<name>RL15_RUEPO</name>
<sequence length="157" mass="16385">MKLHELSDNPGATKKRMRIGRGPGSGKGKMGGRGIKGQKSRSGVAINGYEGGQMPLYQRLPKRGFNKPNRKAFAVVNLGLIQKFVEAGKLDGAAAITEDALVASGLVRRKLDGIRVLAKGDFNAKLNIEVTGASKSAVEAVEKAGGSLKVTNAAAAE</sequence>
<dbReference type="EMBL" id="CP000031">
    <property type="protein sequence ID" value="AAV93822.2"/>
    <property type="molecule type" value="Genomic_DNA"/>
</dbReference>
<dbReference type="RefSeq" id="WP_030003174.1">
    <property type="nucleotide sequence ID" value="NC_003911.12"/>
</dbReference>
<dbReference type="SMR" id="Q5LW38"/>
<dbReference type="STRING" id="246200.SPO0505"/>
<dbReference type="PaxDb" id="246200-SPO0505"/>
<dbReference type="KEGG" id="sil:SPO0505"/>
<dbReference type="eggNOG" id="COG0200">
    <property type="taxonomic scope" value="Bacteria"/>
</dbReference>
<dbReference type="HOGENOM" id="CLU_055188_4_0_5"/>
<dbReference type="OrthoDB" id="9810293at2"/>
<dbReference type="Proteomes" id="UP000001023">
    <property type="component" value="Chromosome"/>
</dbReference>
<dbReference type="GO" id="GO:0022625">
    <property type="term" value="C:cytosolic large ribosomal subunit"/>
    <property type="evidence" value="ECO:0007669"/>
    <property type="project" value="TreeGrafter"/>
</dbReference>
<dbReference type="GO" id="GO:0019843">
    <property type="term" value="F:rRNA binding"/>
    <property type="evidence" value="ECO:0007669"/>
    <property type="project" value="UniProtKB-UniRule"/>
</dbReference>
<dbReference type="GO" id="GO:0003735">
    <property type="term" value="F:structural constituent of ribosome"/>
    <property type="evidence" value="ECO:0007669"/>
    <property type="project" value="InterPro"/>
</dbReference>
<dbReference type="GO" id="GO:0006412">
    <property type="term" value="P:translation"/>
    <property type="evidence" value="ECO:0007669"/>
    <property type="project" value="UniProtKB-UniRule"/>
</dbReference>
<dbReference type="Gene3D" id="3.100.10.10">
    <property type="match status" value="1"/>
</dbReference>
<dbReference type="HAMAP" id="MF_01341">
    <property type="entry name" value="Ribosomal_uL15"/>
    <property type="match status" value="1"/>
</dbReference>
<dbReference type="InterPro" id="IPR030878">
    <property type="entry name" value="Ribosomal_uL15"/>
</dbReference>
<dbReference type="InterPro" id="IPR021131">
    <property type="entry name" value="Ribosomal_uL15/eL18"/>
</dbReference>
<dbReference type="InterPro" id="IPR036227">
    <property type="entry name" value="Ribosomal_uL15/eL18_sf"/>
</dbReference>
<dbReference type="InterPro" id="IPR005749">
    <property type="entry name" value="Ribosomal_uL15_bac-type"/>
</dbReference>
<dbReference type="NCBIfam" id="TIGR01071">
    <property type="entry name" value="rplO_bact"/>
    <property type="match status" value="1"/>
</dbReference>
<dbReference type="PANTHER" id="PTHR12934">
    <property type="entry name" value="50S RIBOSOMAL PROTEIN L15"/>
    <property type="match status" value="1"/>
</dbReference>
<dbReference type="PANTHER" id="PTHR12934:SF11">
    <property type="entry name" value="LARGE RIBOSOMAL SUBUNIT PROTEIN UL15M"/>
    <property type="match status" value="1"/>
</dbReference>
<dbReference type="Pfam" id="PF00828">
    <property type="entry name" value="Ribosomal_L27A"/>
    <property type="match status" value="1"/>
</dbReference>
<dbReference type="SUPFAM" id="SSF52080">
    <property type="entry name" value="Ribosomal proteins L15p and L18e"/>
    <property type="match status" value="1"/>
</dbReference>
<organism>
    <name type="scientific">Ruegeria pomeroyi (strain ATCC 700808 / DSM 15171 / DSS-3)</name>
    <name type="common">Silicibacter pomeroyi</name>
    <dbReference type="NCBI Taxonomy" id="246200"/>
    <lineage>
        <taxon>Bacteria</taxon>
        <taxon>Pseudomonadati</taxon>
        <taxon>Pseudomonadota</taxon>
        <taxon>Alphaproteobacteria</taxon>
        <taxon>Rhodobacterales</taxon>
        <taxon>Roseobacteraceae</taxon>
        <taxon>Ruegeria</taxon>
    </lineage>
</organism>
<evidence type="ECO:0000255" key="1">
    <source>
        <dbReference type="HAMAP-Rule" id="MF_01341"/>
    </source>
</evidence>
<evidence type="ECO:0000256" key="2">
    <source>
        <dbReference type="SAM" id="MobiDB-lite"/>
    </source>
</evidence>
<evidence type="ECO:0000305" key="3"/>
<comment type="function">
    <text evidence="1">Binds to the 23S rRNA.</text>
</comment>
<comment type="subunit">
    <text evidence="1">Part of the 50S ribosomal subunit.</text>
</comment>
<comment type="similarity">
    <text evidence="1">Belongs to the universal ribosomal protein uL15 family.</text>
</comment>
<feature type="chain" id="PRO_0000104805" description="Large ribosomal subunit protein uL15">
    <location>
        <begin position="1"/>
        <end position="157"/>
    </location>
</feature>
<feature type="region of interest" description="Disordered" evidence="2">
    <location>
        <begin position="1"/>
        <end position="40"/>
    </location>
</feature>
<feature type="compositionally biased region" description="Gly residues" evidence="2">
    <location>
        <begin position="21"/>
        <end position="35"/>
    </location>
</feature>
<keyword id="KW-1185">Reference proteome</keyword>
<keyword id="KW-0687">Ribonucleoprotein</keyword>
<keyword id="KW-0689">Ribosomal protein</keyword>
<keyword id="KW-0694">RNA-binding</keyword>
<keyword id="KW-0699">rRNA-binding</keyword>